<organism evidence="9">
    <name type="scientific">Listeria innocua serovar 6a (strain ATCC BAA-680 / CLIP 11262)</name>
    <dbReference type="NCBI Taxonomy" id="272626"/>
    <lineage>
        <taxon>Bacteria</taxon>
        <taxon>Bacillati</taxon>
        <taxon>Bacillota</taxon>
        <taxon>Bacilli</taxon>
        <taxon>Bacillales</taxon>
        <taxon>Listeriaceae</taxon>
        <taxon>Listeria</taxon>
    </lineage>
</organism>
<comment type="function">
    <text evidence="7">ADP-binding subunit of the dihydroxyacetone kinase, which is responsible for the phosphoenolpyruvate (PEP)-dependent phosphorylation of dihydroxyacetone. DhaL-ADP is converted to DhaL-ATP via a phosphoryl group transfer from DhaM and transmits it to dihydroxyacetone binds to DhaK.</text>
</comment>
<comment type="catalytic activity">
    <reaction evidence="7">
        <text>dihydroxyacetone + phosphoenolpyruvate = dihydroxyacetone phosphate + pyruvate</text>
        <dbReference type="Rhea" id="RHEA:18381"/>
        <dbReference type="ChEBI" id="CHEBI:15361"/>
        <dbReference type="ChEBI" id="CHEBI:16016"/>
        <dbReference type="ChEBI" id="CHEBI:57642"/>
        <dbReference type="ChEBI" id="CHEBI:58702"/>
        <dbReference type="EC" id="2.7.1.121"/>
    </reaction>
</comment>
<comment type="cofactor">
    <cofactor evidence="2">
        <name>Mg(2+)</name>
        <dbReference type="ChEBI" id="CHEBI:18420"/>
    </cofactor>
</comment>
<comment type="pathway">
    <text evidence="6">Polyol metabolism; glycerol degradation.</text>
</comment>
<comment type="subunit">
    <text evidence="2">Homodimer. The dihydroxyacetone kinase complex is composed of a homodimer of DhaM, a homodimer of DhaK and the subunit DhaL.</text>
</comment>
<comment type="subcellular location">
    <subcellularLocation>
        <location evidence="7">Cytoplasm</location>
    </subcellularLocation>
</comment>
<comment type="induction">
    <text evidence="4">Repressed by GolR.</text>
</comment>
<comment type="miscellaneous">
    <text evidence="7">Unlike the carbohydrate-specific transporters of the PTS, the complex DhaKML has no transport activity.</text>
</comment>
<keyword id="KW-0067">ATP-binding</keyword>
<keyword id="KW-0963">Cytoplasm</keyword>
<keyword id="KW-0319">Glycerol metabolism</keyword>
<keyword id="KW-0418">Kinase</keyword>
<keyword id="KW-0460">Magnesium</keyword>
<keyword id="KW-0479">Metal-binding</keyword>
<keyword id="KW-0547">Nucleotide-binding</keyword>
<keyword id="KW-0808">Transferase</keyword>
<sequence>MSELVMDSAFFGHVLQDMGALIEKERDYLTGLDSDIGDGDHGINLSIGFREVNKQLDELLTVSPDIATLLKKSGMILLGKVGGASGPLYGSFFMKCGADVPGKTEVNFDELCGMIINGAAAVQHRGKAELGDKTMMDAFLPGVEVLQNRDTNADPIETFSAFVDAMHAGAQSTIPLIAKKGRALRLGERAIGHLDPGSESSWMLMNVILENLKKAV</sequence>
<gene>
    <name evidence="5" type="primary">dhaL-2</name>
    <name evidence="8" type="ordered locus">lin0365</name>
</gene>
<dbReference type="EC" id="2.7.1.121" evidence="7"/>
<dbReference type="EMBL" id="AL596164">
    <property type="protein sequence ID" value="CAC95598.1"/>
    <property type="molecule type" value="Genomic_DNA"/>
</dbReference>
<dbReference type="PIR" id="AF1478">
    <property type="entry name" value="AF1478"/>
</dbReference>
<dbReference type="RefSeq" id="WP_003770292.1">
    <property type="nucleotide sequence ID" value="NC_003212.1"/>
</dbReference>
<dbReference type="SMR" id="Q92EU3"/>
<dbReference type="STRING" id="272626.gene:17564692"/>
<dbReference type="GeneID" id="93233815"/>
<dbReference type="KEGG" id="lin:lin0365"/>
<dbReference type="eggNOG" id="COG1461">
    <property type="taxonomic scope" value="Bacteria"/>
</dbReference>
<dbReference type="HOGENOM" id="CLU_066424_5_0_9"/>
<dbReference type="OrthoDB" id="9800291at2"/>
<dbReference type="UniPathway" id="UPA00616"/>
<dbReference type="Proteomes" id="UP000002513">
    <property type="component" value="Chromosome"/>
</dbReference>
<dbReference type="GO" id="GO:0005829">
    <property type="term" value="C:cytosol"/>
    <property type="evidence" value="ECO:0007669"/>
    <property type="project" value="TreeGrafter"/>
</dbReference>
<dbReference type="GO" id="GO:0005524">
    <property type="term" value="F:ATP binding"/>
    <property type="evidence" value="ECO:0000250"/>
    <property type="project" value="UniProtKB"/>
</dbReference>
<dbReference type="GO" id="GO:0004371">
    <property type="term" value="F:glycerone kinase activity"/>
    <property type="evidence" value="ECO:0007669"/>
    <property type="project" value="InterPro"/>
</dbReference>
<dbReference type="GO" id="GO:0000287">
    <property type="term" value="F:magnesium ion binding"/>
    <property type="evidence" value="ECO:0000250"/>
    <property type="project" value="UniProtKB"/>
</dbReference>
<dbReference type="GO" id="GO:0047324">
    <property type="term" value="F:phosphoenolpyruvate-glycerone phosphotransferase activity"/>
    <property type="evidence" value="ECO:0000314"/>
    <property type="project" value="UniProtKB"/>
</dbReference>
<dbReference type="GO" id="GO:0019563">
    <property type="term" value="P:glycerol catabolic process"/>
    <property type="evidence" value="ECO:0007669"/>
    <property type="project" value="UniProtKB-UniPathway"/>
</dbReference>
<dbReference type="FunFam" id="1.25.40.340:FF:000002">
    <property type="entry name" value="Dihydroxyacetone kinase, L subunit"/>
    <property type="match status" value="1"/>
</dbReference>
<dbReference type="Gene3D" id="1.25.40.340">
    <property type="match status" value="1"/>
</dbReference>
<dbReference type="InterPro" id="IPR012737">
    <property type="entry name" value="DhaK_L_YcgS"/>
</dbReference>
<dbReference type="InterPro" id="IPR004007">
    <property type="entry name" value="DhaL_dom"/>
</dbReference>
<dbReference type="InterPro" id="IPR036117">
    <property type="entry name" value="DhaL_dom_sf"/>
</dbReference>
<dbReference type="InterPro" id="IPR050861">
    <property type="entry name" value="Dihydroxyacetone_Kinase"/>
</dbReference>
<dbReference type="NCBIfam" id="TIGR02365">
    <property type="entry name" value="dha_L_ycgS"/>
    <property type="match status" value="1"/>
</dbReference>
<dbReference type="PANTHER" id="PTHR28629">
    <property type="entry name" value="TRIOKINASE/FMN CYCLASE"/>
    <property type="match status" value="1"/>
</dbReference>
<dbReference type="PANTHER" id="PTHR28629:SF4">
    <property type="entry name" value="TRIOKINASE_FMN CYCLASE"/>
    <property type="match status" value="1"/>
</dbReference>
<dbReference type="Pfam" id="PF02734">
    <property type="entry name" value="Dak2"/>
    <property type="match status" value="1"/>
</dbReference>
<dbReference type="SMART" id="SM01120">
    <property type="entry name" value="Dak2"/>
    <property type="match status" value="1"/>
</dbReference>
<dbReference type="SUPFAM" id="SSF101473">
    <property type="entry name" value="DhaL-like"/>
    <property type="match status" value="1"/>
</dbReference>
<dbReference type="PROSITE" id="PS51480">
    <property type="entry name" value="DHAL"/>
    <property type="match status" value="1"/>
</dbReference>
<reference key="1">
    <citation type="journal article" date="2001" name="Science">
        <title>Comparative genomics of Listeria species.</title>
        <authorList>
            <person name="Glaser P."/>
            <person name="Frangeul L."/>
            <person name="Buchrieser C."/>
            <person name="Rusniok C."/>
            <person name="Amend A."/>
            <person name="Baquero F."/>
            <person name="Berche P."/>
            <person name="Bloecker H."/>
            <person name="Brandt P."/>
            <person name="Chakraborty T."/>
            <person name="Charbit A."/>
            <person name="Chetouani F."/>
            <person name="Couve E."/>
            <person name="de Daruvar A."/>
            <person name="Dehoux P."/>
            <person name="Domann E."/>
            <person name="Dominguez-Bernal G."/>
            <person name="Duchaud E."/>
            <person name="Durant L."/>
            <person name="Dussurget O."/>
            <person name="Entian K.-D."/>
            <person name="Fsihi H."/>
            <person name="Garcia-del Portillo F."/>
            <person name="Garrido P."/>
            <person name="Gautier L."/>
            <person name="Goebel W."/>
            <person name="Gomez-Lopez N."/>
            <person name="Hain T."/>
            <person name="Hauf J."/>
            <person name="Jackson D."/>
            <person name="Jones L.-M."/>
            <person name="Kaerst U."/>
            <person name="Kreft J."/>
            <person name="Kuhn M."/>
            <person name="Kunst F."/>
            <person name="Kurapkat G."/>
            <person name="Madueno E."/>
            <person name="Maitournam A."/>
            <person name="Mata Vicente J."/>
            <person name="Ng E."/>
            <person name="Nedjari H."/>
            <person name="Nordsiek G."/>
            <person name="Novella S."/>
            <person name="de Pablos B."/>
            <person name="Perez-Diaz J.-C."/>
            <person name="Purcell R."/>
            <person name="Remmel B."/>
            <person name="Rose M."/>
            <person name="Schlueter T."/>
            <person name="Simoes N."/>
            <person name="Tierrez A."/>
            <person name="Vazquez-Boland J.-A."/>
            <person name="Voss H."/>
            <person name="Wehland J."/>
            <person name="Cossart P."/>
        </authorList>
    </citation>
    <scope>NUCLEOTIDE SEQUENCE [LARGE SCALE GENOMIC DNA]</scope>
    <source>
        <strain>ATCC BAA-680 / CLIP 11262</strain>
    </source>
</reference>
<reference key="2">
    <citation type="journal article" date="2012" name="J. Bacteriol.">
        <title>Novel listerial glycerol dehydrogenase- and phosphoenolpyruvate-dependent dihydroxyacetone kinase system connected to the pentose phosphate pathway.</title>
        <authorList>
            <person name="Monniot C."/>
            <person name="Zebre A.C."/>
            <person name="Ake F.M."/>
            <person name="Deutscher J."/>
            <person name="Milohanic E."/>
        </authorList>
    </citation>
    <scope>FUNCTION</scope>
    <scope>CATALYTIC ACTIVITY</scope>
    <scope>SUBCELLULAR LOCATION</scope>
    <scope>INDUCTION</scope>
    <source>
        <strain>ATCC BAA-680 / CLIP 11262</strain>
    </source>
</reference>
<name>DHAL2_LISIN</name>
<accession>Q92EU3</accession>
<protein>
    <recommendedName>
        <fullName evidence="7">PEP-dependent dihydroxyacetone kinase 2, ADP-binding subunit DhaL</fullName>
        <ecNumber evidence="7">2.7.1.121</ecNumber>
    </recommendedName>
</protein>
<evidence type="ECO:0000250" key="1">
    <source>
        <dbReference type="UniProtKB" id="P76014"/>
    </source>
</evidence>
<evidence type="ECO:0000250" key="2">
    <source>
        <dbReference type="UniProtKB" id="Q9CIV7"/>
    </source>
</evidence>
<evidence type="ECO:0000255" key="3">
    <source>
        <dbReference type="PROSITE-ProRule" id="PRU00813"/>
    </source>
</evidence>
<evidence type="ECO:0000269" key="4">
    <source>
    </source>
</evidence>
<evidence type="ECO:0000303" key="5">
    <source>
    </source>
</evidence>
<evidence type="ECO:0000305" key="6"/>
<evidence type="ECO:0000305" key="7">
    <source>
    </source>
</evidence>
<evidence type="ECO:0000312" key="8">
    <source>
        <dbReference type="EMBL" id="CAC95598.1"/>
    </source>
</evidence>
<evidence type="ECO:0000312" key="9">
    <source>
        <dbReference type="Proteomes" id="UP000002513"/>
    </source>
</evidence>
<proteinExistence type="evidence at protein level"/>
<feature type="chain" id="PRO_0000439401" description="PEP-dependent dihydroxyacetone kinase 2, ADP-binding subunit DhaL">
    <location>
        <begin position="1"/>
        <end position="216"/>
    </location>
</feature>
<feature type="domain" description="DhaL" evidence="3">
    <location>
        <begin position="9"/>
        <end position="210"/>
    </location>
</feature>
<feature type="binding site" evidence="2">
    <location>
        <position position="33"/>
    </location>
    <ligand>
        <name>Mg(2+)</name>
        <dbReference type="ChEBI" id="CHEBI:18420"/>
    </ligand>
</feature>
<feature type="binding site" evidence="2">
    <location>
        <position position="38"/>
    </location>
    <ligand>
        <name>Mg(2+)</name>
        <dbReference type="ChEBI" id="CHEBI:18420"/>
    </ligand>
</feature>
<feature type="binding site" evidence="2">
    <location>
        <position position="40"/>
    </location>
    <ligand>
        <name>Mg(2+)</name>
        <dbReference type="ChEBI" id="CHEBI:18420"/>
    </ligand>
</feature>
<feature type="binding site" evidence="2">
    <location>
        <begin position="41"/>
        <end position="44"/>
    </location>
    <ligand>
        <name>ADP</name>
        <dbReference type="ChEBI" id="CHEBI:456216"/>
    </ligand>
</feature>
<feature type="binding site" evidence="2">
    <location>
        <begin position="84"/>
        <end position="85"/>
    </location>
    <ligand>
        <name>ADP</name>
        <dbReference type="ChEBI" id="CHEBI:456216"/>
    </ligand>
</feature>
<feature type="binding site" evidence="2">
    <location>
        <position position="126"/>
    </location>
    <ligand>
        <name>ADP</name>
        <dbReference type="ChEBI" id="CHEBI:456216"/>
    </ligand>
</feature>
<feature type="binding site" evidence="1">
    <location>
        <position position="135"/>
    </location>
    <ligand>
        <name>ADP</name>
        <dbReference type="ChEBI" id="CHEBI:456216"/>
    </ligand>
</feature>
<feature type="binding site" evidence="2">
    <location>
        <position position="182"/>
    </location>
    <ligand>
        <name>ADP</name>
        <dbReference type="ChEBI" id="CHEBI:456216"/>
    </ligand>
</feature>
<feature type="binding site" evidence="2">
    <location>
        <begin position="195"/>
        <end position="197"/>
    </location>
    <ligand>
        <name>ADP</name>
        <dbReference type="ChEBI" id="CHEBI:456216"/>
    </ligand>
</feature>